<name>PAN2_ASPNC</name>
<sequence length="1150" mass="128444">MEADWDELSRIPVPAPSVHALPTIATAIAFDDVMELLWGRITSFFGPELQRYTSVRAHPATEPVRQIIFHDRGVISLSPKSVHMITRRGLTQWHIAHEEMTDLRCMSFTAQTNRIIVAGCQKSMFTIDIDKGIIIDKLHTEYNYTIMKKSRYLCAATDTGSVNALSLNDFSVVKSWKAHGTAVNDMDARNDLLVTCGFSVRHLGSPIVDPLANVYDLKTLSPLPPIPFHAGAAYVRMHPKLHTTSFVASQTGQLQVVDLMNPNAINLRQANVSFMLGIDLSPSGEALAINDAECAIHLWGSPAKVHFNEMSKEAEFGDVAPRPPTLDWSPETPLSMIGMPYYHERLFSAWPSHLVFEVGSPPPQVDQALIPYLRPAELGHHAPNPKKTRRYQVENTRALASAEPALIAPKFLSEKAREQNKAKSEGAISDAAEALAGAKINGETDDDPLLKYSNVEIKYSRFGVDDFDFRFYNQTTFSGLETHIANSFTNALLQLFKFIPYIRNVALHHAASSCIFETCLLCEMGYLFDMLEKASGQNCQATNLLKTFSSYREASNLGLFEENLTNKSLSAAIQAVNRFFLGQISHDFRMISPSSDDLDHRLATVASESIRCMFCQNEIVRPGNSLVNELNYPAIDIKQARRNPAFRFSNILRASIEREAQNRGWCNYCRRYQQVAIRKSVHRMPQVLMLNAALTNPICRRLWAIPGWLPEEVGIVIEGGQILCFEGEDLKLRVQAKMPGLVVYDLVGLVCEIDIPEHQKAHLVSFINVSISSREPETKNKWHLFNDFLVTEVDKEEALRFNQPWKIPCVLAYQVQDGRHAMDDTWKDALDTTLLFRDWSLNGGRPVESRVTLSEEEKPTPGTPVALDTEFVDLEKAEIDVKADGSQEIVRPSKSGLARVSVLRGSGIREGVPFIDDYITIKENIVDYVTQYSGIKPGDLDPRVSQHNLVPLKVAYKKLWLLLNLGCVFVGHGLASDFRKVNIQVPKSQTVDTQYLFFHPGKNRRLSLRYLAWAVFKEYIQEEPADDSQGHDSIEDARMALRLWKKFKEYEDAGIVSQILEEIFREGSKLGFRPPPRNGVPTVLSRPGTAVTMQNNSGRNTPSTSDVAGAAASAPATPRQAFRRSIALTPSNGSFAGPGTGDFFSGSPLK</sequence>
<reference key="1">
    <citation type="journal article" date="2007" name="Nat. Biotechnol.">
        <title>Genome sequencing and analysis of the versatile cell factory Aspergillus niger CBS 513.88.</title>
        <authorList>
            <person name="Pel H.J."/>
            <person name="de Winde J.H."/>
            <person name="Archer D.B."/>
            <person name="Dyer P.S."/>
            <person name="Hofmann G."/>
            <person name="Schaap P.J."/>
            <person name="Turner G."/>
            <person name="de Vries R.P."/>
            <person name="Albang R."/>
            <person name="Albermann K."/>
            <person name="Andersen M.R."/>
            <person name="Bendtsen J.D."/>
            <person name="Benen J.A.E."/>
            <person name="van den Berg M."/>
            <person name="Breestraat S."/>
            <person name="Caddick M.X."/>
            <person name="Contreras R."/>
            <person name="Cornell M."/>
            <person name="Coutinho P.M."/>
            <person name="Danchin E.G.J."/>
            <person name="Debets A.J.M."/>
            <person name="Dekker P."/>
            <person name="van Dijck P.W.M."/>
            <person name="van Dijk A."/>
            <person name="Dijkhuizen L."/>
            <person name="Driessen A.J.M."/>
            <person name="d'Enfert C."/>
            <person name="Geysens S."/>
            <person name="Goosen C."/>
            <person name="Groot G.S.P."/>
            <person name="de Groot P.W.J."/>
            <person name="Guillemette T."/>
            <person name="Henrissat B."/>
            <person name="Herweijer M."/>
            <person name="van den Hombergh J.P.T.W."/>
            <person name="van den Hondel C.A.M.J.J."/>
            <person name="van der Heijden R.T.J.M."/>
            <person name="van der Kaaij R.M."/>
            <person name="Klis F.M."/>
            <person name="Kools H.J."/>
            <person name="Kubicek C.P."/>
            <person name="van Kuyk P.A."/>
            <person name="Lauber J."/>
            <person name="Lu X."/>
            <person name="van der Maarel M.J.E.C."/>
            <person name="Meulenberg R."/>
            <person name="Menke H."/>
            <person name="Mortimer M.A."/>
            <person name="Nielsen J."/>
            <person name="Oliver S.G."/>
            <person name="Olsthoorn M."/>
            <person name="Pal K."/>
            <person name="van Peij N.N.M.E."/>
            <person name="Ram A.F.J."/>
            <person name="Rinas U."/>
            <person name="Roubos J.A."/>
            <person name="Sagt C.M.J."/>
            <person name="Schmoll M."/>
            <person name="Sun J."/>
            <person name="Ussery D."/>
            <person name="Varga J."/>
            <person name="Vervecken W."/>
            <person name="van de Vondervoort P.J.J."/>
            <person name="Wedler H."/>
            <person name="Woesten H.A.B."/>
            <person name="Zeng A.-P."/>
            <person name="van Ooyen A.J.J."/>
            <person name="Visser J."/>
            <person name="Stam H."/>
        </authorList>
    </citation>
    <scope>NUCLEOTIDE SEQUENCE [LARGE SCALE GENOMIC DNA]</scope>
    <source>
        <strain>ATCC MYA-4892 / CBS 513.88 / FGSC A1513</strain>
    </source>
</reference>
<proteinExistence type="inferred from homology"/>
<organism>
    <name type="scientific">Aspergillus niger (strain ATCC MYA-4892 / CBS 513.88 / FGSC A1513)</name>
    <dbReference type="NCBI Taxonomy" id="425011"/>
    <lineage>
        <taxon>Eukaryota</taxon>
        <taxon>Fungi</taxon>
        <taxon>Dikarya</taxon>
        <taxon>Ascomycota</taxon>
        <taxon>Pezizomycotina</taxon>
        <taxon>Eurotiomycetes</taxon>
        <taxon>Eurotiomycetidae</taxon>
        <taxon>Eurotiales</taxon>
        <taxon>Aspergillaceae</taxon>
        <taxon>Aspergillus</taxon>
        <taxon>Aspergillus subgen. Circumdati</taxon>
    </lineage>
</organism>
<feature type="chain" id="PRO_0000295337" description="PAN2-PAN3 deadenylation complex catalytic subunit pan2">
    <location>
        <begin position="1"/>
        <end position="1150"/>
    </location>
</feature>
<feature type="repeat" description="WD 1" evidence="2">
    <location>
        <begin position="96"/>
        <end position="139"/>
    </location>
</feature>
<feature type="repeat" description="WD 2" evidence="2">
    <location>
        <begin position="270"/>
        <end position="309"/>
    </location>
</feature>
<feature type="domain" description="USP" evidence="2">
    <location>
        <begin position="447"/>
        <end position="816"/>
    </location>
</feature>
<feature type="domain" description="Exonuclease" evidence="2">
    <location>
        <begin position="865"/>
        <end position="1043"/>
    </location>
</feature>
<feature type="region of interest" description="Linker" evidence="2">
    <location>
        <begin position="310"/>
        <end position="446"/>
    </location>
</feature>
<feature type="region of interest" description="Disordered" evidence="3">
    <location>
        <begin position="1074"/>
        <end position="1150"/>
    </location>
</feature>
<feature type="compositionally biased region" description="Polar residues" evidence="3">
    <location>
        <begin position="1091"/>
        <end position="1106"/>
    </location>
</feature>
<feature type="compositionally biased region" description="Low complexity" evidence="3">
    <location>
        <begin position="1108"/>
        <end position="1120"/>
    </location>
</feature>
<feature type="binding site" evidence="2">
    <location>
        <position position="868"/>
    </location>
    <ligand>
        <name>a divalent metal cation</name>
        <dbReference type="ChEBI" id="CHEBI:60240"/>
        <note>catalytic</note>
    </ligand>
</feature>
<feature type="binding site" evidence="2">
    <location>
        <position position="870"/>
    </location>
    <ligand>
        <name>a divalent metal cation</name>
        <dbReference type="ChEBI" id="CHEBI:60240"/>
        <note>catalytic</note>
    </ligand>
</feature>
<feature type="binding site" evidence="2">
    <location>
        <position position="977"/>
    </location>
    <ligand>
        <name>a divalent metal cation</name>
        <dbReference type="ChEBI" id="CHEBI:60240"/>
        <note>catalytic</note>
    </ligand>
</feature>
<feature type="binding site" evidence="2">
    <location>
        <position position="1036"/>
    </location>
    <ligand>
        <name>a divalent metal cation</name>
        <dbReference type="ChEBI" id="CHEBI:60240"/>
        <note>catalytic</note>
    </ligand>
</feature>
<dbReference type="EC" id="3.1.13.4" evidence="2"/>
<dbReference type="EMBL" id="AM270233">
    <property type="protein sequence ID" value="CAK40653.1"/>
    <property type="molecule type" value="Genomic_DNA"/>
</dbReference>
<dbReference type="SMR" id="A2QW83"/>
<dbReference type="MEROPS" id="C19.978"/>
<dbReference type="EnsemblFungi" id="CAK40653">
    <property type="protein sequence ID" value="CAK40653"/>
    <property type="gene ID" value="An11g04210"/>
</dbReference>
<dbReference type="HOGENOM" id="CLU_002369_1_0_1"/>
<dbReference type="Proteomes" id="UP000006706">
    <property type="component" value="Chromosome 7R"/>
</dbReference>
<dbReference type="GO" id="GO:0000932">
    <property type="term" value="C:P-body"/>
    <property type="evidence" value="ECO:0007669"/>
    <property type="project" value="TreeGrafter"/>
</dbReference>
<dbReference type="GO" id="GO:0031251">
    <property type="term" value="C:PAN complex"/>
    <property type="evidence" value="ECO:0007669"/>
    <property type="project" value="UniProtKB-UniRule"/>
</dbReference>
<dbReference type="GO" id="GO:0046872">
    <property type="term" value="F:metal ion binding"/>
    <property type="evidence" value="ECO:0007669"/>
    <property type="project" value="UniProtKB-KW"/>
</dbReference>
<dbReference type="GO" id="GO:0003676">
    <property type="term" value="F:nucleic acid binding"/>
    <property type="evidence" value="ECO:0007669"/>
    <property type="project" value="InterPro"/>
</dbReference>
<dbReference type="GO" id="GO:0004535">
    <property type="term" value="F:poly(A)-specific ribonuclease activity"/>
    <property type="evidence" value="ECO:0007669"/>
    <property type="project" value="UniProtKB-UniRule"/>
</dbReference>
<dbReference type="GO" id="GO:0006397">
    <property type="term" value="P:mRNA processing"/>
    <property type="evidence" value="ECO:0007669"/>
    <property type="project" value="UniProtKB-KW"/>
</dbReference>
<dbReference type="GO" id="GO:0000289">
    <property type="term" value="P:nuclear-transcribed mRNA poly(A) tail shortening"/>
    <property type="evidence" value="ECO:0007669"/>
    <property type="project" value="UniProtKB-UniRule"/>
</dbReference>
<dbReference type="CDD" id="cd06143">
    <property type="entry name" value="PAN2_exo"/>
    <property type="match status" value="1"/>
</dbReference>
<dbReference type="FunFam" id="2.130.10.10:FF:000459">
    <property type="entry name" value="PAN2-PAN3 deadenylation complex catalytic subunit PAN2"/>
    <property type="match status" value="1"/>
</dbReference>
<dbReference type="FunFam" id="3.30.420.10:FF:000028">
    <property type="entry name" value="PAN2-PAN3 deadenylation complex catalytic subunit PAN2"/>
    <property type="match status" value="1"/>
</dbReference>
<dbReference type="FunFam" id="3.90.70.10:FF:000135">
    <property type="entry name" value="PAN2-PAN3 deadenylation complex catalytic subunit pan2"/>
    <property type="match status" value="1"/>
</dbReference>
<dbReference type="Gene3D" id="3.90.70.10">
    <property type="entry name" value="Cysteine proteinases"/>
    <property type="match status" value="1"/>
</dbReference>
<dbReference type="Gene3D" id="3.30.420.10">
    <property type="entry name" value="Ribonuclease H-like superfamily/Ribonuclease H"/>
    <property type="match status" value="1"/>
</dbReference>
<dbReference type="Gene3D" id="2.130.10.10">
    <property type="entry name" value="YVTN repeat-like/Quinoprotein amine dehydrogenase"/>
    <property type="match status" value="1"/>
</dbReference>
<dbReference type="HAMAP" id="MF_03182">
    <property type="entry name" value="PAN2"/>
    <property type="match status" value="1"/>
</dbReference>
<dbReference type="InterPro" id="IPR013520">
    <property type="entry name" value="Exonuclease_RNaseT/DNA_pol3"/>
</dbReference>
<dbReference type="InterPro" id="IPR030843">
    <property type="entry name" value="PAN2"/>
</dbReference>
<dbReference type="InterPro" id="IPR050785">
    <property type="entry name" value="PAN2-PAN3_catalytic_subunit"/>
</dbReference>
<dbReference type="InterPro" id="IPR048841">
    <property type="entry name" value="PAN2_N"/>
</dbReference>
<dbReference type="InterPro" id="IPR028881">
    <property type="entry name" value="PAN2_UCH_dom"/>
</dbReference>
<dbReference type="InterPro" id="IPR038765">
    <property type="entry name" value="Papain-like_cys_pep_sf"/>
</dbReference>
<dbReference type="InterPro" id="IPR012337">
    <property type="entry name" value="RNaseH-like_sf"/>
</dbReference>
<dbReference type="InterPro" id="IPR036397">
    <property type="entry name" value="RNaseH_sf"/>
</dbReference>
<dbReference type="InterPro" id="IPR028889">
    <property type="entry name" value="USP_dom"/>
</dbReference>
<dbReference type="InterPro" id="IPR015943">
    <property type="entry name" value="WD40/YVTN_repeat-like_dom_sf"/>
</dbReference>
<dbReference type="InterPro" id="IPR036322">
    <property type="entry name" value="WD40_repeat_dom_sf"/>
</dbReference>
<dbReference type="PANTHER" id="PTHR15728">
    <property type="entry name" value="DEADENYLATION COMPLEX CATALYTIC SUBUNIT PAN2"/>
    <property type="match status" value="1"/>
</dbReference>
<dbReference type="PANTHER" id="PTHR15728:SF0">
    <property type="entry name" value="PAN2-PAN3 DEADENYLATION COMPLEX CATALYTIC SUBUNIT PAN2"/>
    <property type="match status" value="1"/>
</dbReference>
<dbReference type="Pfam" id="PF20770">
    <property type="entry name" value="PAN2_N"/>
    <property type="match status" value="1"/>
</dbReference>
<dbReference type="Pfam" id="PF00929">
    <property type="entry name" value="RNase_T"/>
    <property type="match status" value="1"/>
</dbReference>
<dbReference type="Pfam" id="PF13423">
    <property type="entry name" value="UCH_1"/>
    <property type="match status" value="1"/>
</dbReference>
<dbReference type="SMART" id="SM00479">
    <property type="entry name" value="EXOIII"/>
    <property type="match status" value="1"/>
</dbReference>
<dbReference type="SUPFAM" id="SSF54001">
    <property type="entry name" value="Cysteine proteinases"/>
    <property type="match status" value="1"/>
</dbReference>
<dbReference type="SUPFAM" id="SSF53098">
    <property type="entry name" value="Ribonuclease H-like"/>
    <property type="match status" value="1"/>
</dbReference>
<dbReference type="SUPFAM" id="SSF50978">
    <property type="entry name" value="WD40 repeat-like"/>
    <property type="match status" value="1"/>
</dbReference>
<dbReference type="PROSITE" id="PS50235">
    <property type="entry name" value="USP_3"/>
    <property type="match status" value="1"/>
</dbReference>
<accession>A2QW83</accession>
<comment type="function">
    <text evidence="2">Catalytic subunit of the poly(A)-nuclease (PAN) deadenylation complex, one of two cytoplasmic mRNA deadenylases involved in mRNA turnover. PAN specifically shortens poly(A) tails of RNA and the activity is stimulated by poly(A)-binding protein pab1. PAN deadenylation is followed by rapid degradation of the shortened mRNA tails by the CCR4-NOT complex. Deadenylated mRNAs are then degraded by two alternative mechanisms, namely exosome-mediated 3'-5' exonucleolytic degradation, or deadenylation-dependent mRNA decaping and subsequent 5'-3' exonucleolytic degradation by xrn1. May also be involved in post-transcriptional maturation of mRNA poly(A) tails.</text>
</comment>
<comment type="catalytic activity">
    <reaction evidence="2">
        <text>Exonucleolytic cleavage of poly(A) to 5'-AMP.</text>
        <dbReference type="EC" id="3.1.13.4"/>
    </reaction>
</comment>
<comment type="cofactor">
    <cofactor evidence="2">
        <name>a divalent metal cation</name>
        <dbReference type="ChEBI" id="CHEBI:60240"/>
    </cofactor>
    <text evidence="2">Binds 2 metal cations per subunit in the catalytic exonuclease domain.</text>
</comment>
<comment type="activity regulation">
    <text evidence="1 2">Positively regulated by the regulatory subunit pan3.</text>
</comment>
<comment type="subunit">
    <text evidence="2">Forms a heterotrimer with an asymmetric homodimer of the regulatory subunit pan3 to form the poly(A)-nuclease (PAN) deadenylation complex.</text>
</comment>
<comment type="subcellular location">
    <subcellularLocation>
        <location evidence="2">Cytoplasm</location>
    </subcellularLocation>
</comment>
<comment type="domain">
    <text evidence="2">Contains a pseudo-UCH domain. This ubiquitin C-terminal hydrolase (UCH)-like or ubiquitin specific protease (USP)-like domain is predicted to be catalytically inactive because it lacks the active site catalytic triad characteristic of thiol proteases, with residues at the equivalent structural positions that are incompatible with catalysis, and it cannot bind ubiquitin. It functions as a structural scaffold for intra- and intermolecular interactions in the complex.</text>
</comment>
<comment type="domain">
    <text evidence="2">The linker, or PAN3 interaction domain (PID), between the WD40 repeats and the pseudo-UCH domain mediates interaction with pan3.</text>
</comment>
<comment type="similarity">
    <text evidence="2">Belongs to the peptidase C19 family. PAN2 subfamily.</text>
</comment>
<keyword id="KW-0963">Cytoplasm</keyword>
<keyword id="KW-0269">Exonuclease</keyword>
<keyword id="KW-0378">Hydrolase</keyword>
<keyword id="KW-0479">Metal-binding</keyword>
<keyword id="KW-0507">mRNA processing</keyword>
<keyword id="KW-0540">Nuclease</keyword>
<keyword id="KW-1185">Reference proteome</keyword>
<keyword id="KW-0677">Repeat</keyword>
<keyword id="KW-0853">WD repeat</keyword>
<evidence type="ECO:0000250" key="1"/>
<evidence type="ECO:0000255" key="2">
    <source>
        <dbReference type="HAMAP-Rule" id="MF_03182"/>
    </source>
</evidence>
<evidence type="ECO:0000256" key="3">
    <source>
        <dbReference type="SAM" id="MobiDB-lite"/>
    </source>
</evidence>
<gene>
    <name evidence="2" type="primary">pan2</name>
    <name type="ORF">An11g04210</name>
</gene>
<protein>
    <recommendedName>
        <fullName evidence="2">PAN2-PAN3 deadenylation complex catalytic subunit pan2</fullName>
        <ecNumber evidence="2">3.1.13.4</ecNumber>
    </recommendedName>
    <alternativeName>
        <fullName evidence="2">PAB1P-dependent poly(A)-specific ribonuclease</fullName>
    </alternativeName>
    <alternativeName>
        <fullName evidence="2">Poly(A)-nuclease deadenylation complex subunit 2</fullName>
        <shortName evidence="2">PAN deadenylation complex subunit 2</shortName>
    </alternativeName>
</protein>